<evidence type="ECO:0000255" key="1"/>
<evidence type="ECO:0000269" key="2">
    <source>
    </source>
</evidence>
<evidence type="ECO:0000269" key="3">
    <source>
    </source>
</evidence>
<evidence type="ECO:0000269" key="4">
    <source>
    </source>
</evidence>
<evidence type="ECO:0000305" key="5"/>
<evidence type="ECO:0007829" key="6">
    <source>
        <dbReference type="PDB" id="1HQK"/>
    </source>
</evidence>
<evidence type="ECO:0007829" key="7">
    <source>
        <dbReference type="PDB" id="8YT4"/>
    </source>
</evidence>
<name>RISB_AQUAE</name>
<proteinExistence type="evidence at protein level"/>
<feature type="chain" id="PRO_0000134708" description="6,7-dimethyl-8-ribityllumazine synthase">
    <location>
        <begin position="1"/>
        <end position="154"/>
    </location>
</feature>
<feature type="active site" description="Proton donor" evidence="1">
    <location>
        <position position="88"/>
    </location>
</feature>
<feature type="binding site">
    <location>
        <begin position="22"/>
        <end position="23"/>
    </location>
    <ligand>
        <name>5-amino-6-(D-ribitylamino)uracil</name>
        <dbReference type="ChEBI" id="CHEBI:15934"/>
    </ligand>
</feature>
<feature type="binding site">
    <location>
        <begin position="56"/>
        <end position="58"/>
    </location>
    <ligand>
        <name>5-amino-6-(D-ribitylamino)uracil</name>
        <dbReference type="ChEBI" id="CHEBI:15934"/>
    </ligand>
</feature>
<feature type="binding site">
    <location>
        <begin position="80"/>
        <end position="82"/>
    </location>
    <ligand>
        <name>5-amino-6-(D-ribitylamino)uracil</name>
        <dbReference type="ChEBI" id="CHEBI:15934"/>
    </ligand>
</feature>
<feature type="binding site" evidence="5">
    <location>
        <begin position="85"/>
        <end position="86"/>
    </location>
    <ligand>
        <name>(2S)-2-hydroxy-3-oxobutyl phosphate</name>
        <dbReference type="ChEBI" id="CHEBI:58830"/>
    </ligand>
</feature>
<feature type="binding site">
    <location>
        <position position="113"/>
    </location>
    <ligand>
        <name>5-amino-6-(D-ribitylamino)uracil</name>
        <dbReference type="ChEBI" id="CHEBI:15934"/>
    </ligand>
</feature>
<feature type="binding site" evidence="5">
    <location>
        <position position="127"/>
    </location>
    <ligand>
        <name>(2S)-2-hydroxy-3-oxobutyl phosphate</name>
        <dbReference type="ChEBI" id="CHEBI:58830"/>
    </ligand>
</feature>
<feature type="binding site">
    <location>
        <position position="135"/>
    </location>
    <ligand>
        <name>5-amino-6-(D-ribitylamino)uracil</name>
        <dbReference type="ChEBI" id="CHEBI:15934"/>
    </ligand>
</feature>
<feature type="strand" evidence="6">
    <location>
        <begin position="2"/>
        <end position="4"/>
    </location>
</feature>
<feature type="strand" evidence="7">
    <location>
        <begin position="15"/>
        <end position="20"/>
    </location>
</feature>
<feature type="helix" evidence="7">
    <location>
        <begin position="24"/>
        <end position="40"/>
    </location>
</feature>
<feature type="helix" evidence="7">
    <location>
        <begin position="45"/>
        <end position="47"/>
    </location>
</feature>
<feature type="strand" evidence="7">
    <location>
        <begin position="48"/>
        <end position="55"/>
    </location>
</feature>
<feature type="helix" evidence="7">
    <location>
        <begin position="56"/>
        <end position="58"/>
    </location>
</feature>
<feature type="helix" evidence="7">
    <location>
        <begin position="59"/>
        <end position="67"/>
    </location>
</feature>
<feature type="strand" evidence="7">
    <location>
        <begin position="73"/>
        <end position="82"/>
    </location>
</feature>
<feature type="helix" evidence="7">
    <location>
        <begin position="88"/>
        <end position="107"/>
    </location>
</feature>
<feature type="strand" evidence="7">
    <location>
        <begin position="111"/>
        <end position="120"/>
    </location>
</feature>
<feature type="helix" evidence="7">
    <location>
        <begin position="121"/>
        <end position="126"/>
    </location>
</feature>
<feature type="strand" evidence="7">
    <location>
        <begin position="128"/>
        <end position="130"/>
    </location>
</feature>
<feature type="helix" evidence="7">
    <location>
        <begin position="135"/>
        <end position="152"/>
    </location>
</feature>
<reference key="1">
    <citation type="journal article" date="1998" name="Nature">
        <title>The complete genome of the hyperthermophilic bacterium Aquifex aeolicus.</title>
        <authorList>
            <person name="Deckert G."/>
            <person name="Warren P.V."/>
            <person name="Gaasterland T."/>
            <person name="Young W.G."/>
            <person name="Lenox A.L."/>
            <person name="Graham D.E."/>
            <person name="Overbeek R."/>
            <person name="Snead M.A."/>
            <person name="Keller M."/>
            <person name="Aujay M."/>
            <person name="Huber R."/>
            <person name="Feldman R.A."/>
            <person name="Short J.M."/>
            <person name="Olsen G.J."/>
            <person name="Swanson R.V."/>
        </authorList>
    </citation>
    <scope>NUCLEOTIDE SEQUENCE [LARGE SCALE GENOMIC DNA]</scope>
    <source>
        <strain>VF5</strain>
    </source>
</reference>
<reference key="2">
    <citation type="journal article" date="2003" name="Eur. J. Biochem.">
        <title>Biosynthesis of riboflavin in archaea. 6,7-dimethyl-8-ribityllumazine synthase of Methanococcus jannaschii.</title>
        <authorList>
            <person name="Haase I."/>
            <person name="Mortl S."/>
            <person name="Kohler P."/>
            <person name="Bacher A."/>
            <person name="Fischer M."/>
        </authorList>
    </citation>
    <scope>FUNCTION</scope>
    <scope>CATALYTIC ACTIVITY</scope>
    <scope>KINETIC PARAMETERS</scope>
    <source>
        <strain>VF5</strain>
    </source>
</reference>
<reference key="3">
    <citation type="journal article" date="2001" name="J. Mol. Biol.">
        <title>X-ray structure analysis and crystallographic refinement of lumazine synthase from the hyperthermophile Aquifex aeolicus at 1.6 A resolution: determinants of thermostability revealed from structural comparisons.</title>
        <authorList>
            <person name="Zhang X."/>
            <person name="Meining W."/>
            <person name="Fischer M."/>
            <person name="Bacher A."/>
            <person name="Ladenstein R."/>
        </authorList>
    </citation>
    <scope>X-RAY CRYSTALLOGRAPHY (1.6 ANGSTROMS) OF APOENZYME</scope>
    <scope>FUNCTION</scope>
    <scope>CATALYTIC ACTIVITY</scope>
    <scope>TEMPERATURE DEPENDENCE</scope>
    <scope>SUBUNIT</scope>
    <source>
        <strain>VF5</strain>
    </source>
</reference>
<reference key="4">
    <citation type="journal article" date="2003" name="J. Mol. Biol.">
        <title>A structure-based model of the reaction catalyzed by lumazine synthase from Aquifex aeolicus.</title>
        <authorList>
            <person name="Zhang X."/>
            <person name="Meining W."/>
            <person name="Cushman M."/>
            <person name="Haase I."/>
            <person name="Fischer M."/>
            <person name="Bacher A."/>
            <person name="Ladenstein R."/>
        </authorList>
    </citation>
    <scope>X-RAY CRYSTALLOGRAPHY (1.75 ANGSTROMS) IN COMPLEXES WITH SUBSTRATE ANALOG OR REACTION INTERMEDIATE ANALOG INHIBITORS AND PHOSPHATE</scope>
    <scope>PATHWAY</scope>
    <scope>ACTIVE SITE</scope>
    <scope>REACTION MECHANISM</scope>
    <source>
        <strain>VF5</strain>
    </source>
</reference>
<organism>
    <name type="scientific">Aquifex aeolicus (strain VF5)</name>
    <dbReference type="NCBI Taxonomy" id="224324"/>
    <lineage>
        <taxon>Bacteria</taxon>
        <taxon>Pseudomonadati</taxon>
        <taxon>Aquificota</taxon>
        <taxon>Aquificia</taxon>
        <taxon>Aquificales</taxon>
        <taxon>Aquificaceae</taxon>
        <taxon>Aquifex</taxon>
    </lineage>
</organism>
<accession>O66529</accession>
<keyword id="KW-0002">3D-structure</keyword>
<keyword id="KW-1185">Reference proteome</keyword>
<keyword id="KW-0686">Riboflavin biosynthesis</keyword>
<keyword id="KW-0808">Transferase</keyword>
<dbReference type="EC" id="2.5.1.78"/>
<dbReference type="EMBL" id="AE000657">
    <property type="protein sequence ID" value="AAC06489.1"/>
    <property type="molecule type" value="Genomic_DNA"/>
</dbReference>
<dbReference type="PIR" id="F70312">
    <property type="entry name" value="F70312"/>
</dbReference>
<dbReference type="RefSeq" id="NP_213089.1">
    <property type="nucleotide sequence ID" value="NC_000918.1"/>
</dbReference>
<dbReference type="RefSeq" id="WP_010880027.1">
    <property type="nucleotide sequence ID" value="NC_000918.1"/>
</dbReference>
<dbReference type="PDB" id="1HQK">
    <property type="method" value="X-ray"/>
    <property type="resolution" value="1.60 A"/>
    <property type="chains" value="A/B/C/D/E=1-154"/>
</dbReference>
<dbReference type="PDB" id="1NQU">
    <property type="method" value="X-ray"/>
    <property type="resolution" value="1.75 A"/>
    <property type="chains" value="A/B/C/D/E=1-154"/>
</dbReference>
<dbReference type="PDB" id="1NQV">
    <property type="method" value="X-ray"/>
    <property type="resolution" value="2.05 A"/>
    <property type="chains" value="A/B/C/D/E=1-154"/>
</dbReference>
<dbReference type="PDB" id="1NQW">
    <property type="method" value="X-ray"/>
    <property type="resolution" value="2.20 A"/>
    <property type="chains" value="A/B/C/D/E=1-154"/>
</dbReference>
<dbReference type="PDB" id="1NQX">
    <property type="method" value="X-ray"/>
    <property type="resolution" value="1.82 A"/>
    <property type="chains" value="A/B/C/D/E=1-154"/>
</dbReference>
<dbReference type="PDB" id="5MPP">
    <property type="method" value="EM"/>
    <property type="resolution" value="3.94 A"/>
    <property type="chains" value="0/1/2/3/4/5/6/7/8/9/A/B/C/D/E/F/G/H/I/J/K/L/M/N/O/P/Q/R/S/T=1-154"/>
</dbReference>
<dbReference type="PDB" id="5MQ3">
    <property type="method" value="EM"/>
    <property type="resolution" value="5.40 A"/>
    <property type="chains" value="AA/AB/AC/AD/AE/AF/AG/AH/AI/AJ/AK/AL/AM/AN/AO/BA/BB/BC/BD/BE/BF/BG/BH/BI/BJ/BK/BL/BM/BN/BO=1-154"/>
</dbReference>
<dbReference type="PDB" id="5MQ7">
    <property type="method" value="EM"/>
    <property type="resolution" value="5.20 A"/>
    <property type="chains" value="0A/0B/0C/0D/0E/0X/1A/1B/1C/1D/1E/1X/2A/2B/2C/2D/2E/2X/3A/3B/3C/3D/3E/3X/4A/4B/4C/4D/4E/4X=1-154"/>
</dbReference>
<dbReference type="PDB" id="7A4F">
    <property type="method" value="EM"/>
    <property type="resolution" value="3.50 A"/>
    <property type="chains" value="AA/AB/AC/AD/AE/AF/AG/AH/AI/AJ/BA/BB/BC/BD/BE/BF/BG/BH/BI/BJ/CA/CB/CC/CD/CE/CF/CG/CH/CI/CJ=1-84"/>
</dbReference>
<dbReference type="PDB" id="7A4G">
    <property type="method" value="EM"/>
    <property type="resolution" value="4.20 A"/>
    <property type="chains" value="AA/AB/AC/AD/AE/AF/AG/AH/AI/AJ/AK/AL/AM/AN/AO/BA/BB/BC/BD/BE/BF/BG/BH/BI/BJ/BK/BL/BM/BN/BO=1-84"/>
</dbReference>
<dbReference type="PDB" id="7A4H">
    <property type="method" value="EM"/>
    <property type="resolution" value="4.50 A"/>
    <property type="chains" value="AA/AB/AC/AD/AE/AF/AG/AH/AI/AJ/AK/AL/AM/AN/AO/BA/BB/BC/BD/BE/BF/BG/BH/BI/BJ/BK/BL/BM/BN/BO=1-84"/>
</dbReference>
<dbReference type="PDB" id="7A4I">
    <property type="method" value="EM"/>
    <property type="resolution" value="7.04 A"/>
    <property type="chains" value="0A/0B/0C/0D/1A/1B/1C/1D/2A/2B/2C/2D/3A/3B/3C/3D/4A/4B/4C/4D/5A/5B/5C/5D/6A/6B/6C/6D/7A/7B=1-84"/>
</dbReference>
<dbReference type="PDB" id="7A4J">
    <property type="method" value="EM"/>
    <property type="resolution" value="3.04 A"/>
    <property type="chains" value="0A/0B/0C/0D/1A/1B/1C/1D/2A/2B/2C/2D/3A/3B/3C/3D/4A/4B/4C/4D/5A/5B/5C/5D/6A/6B/6C/6D/7A/7B=1-84"/>
</dbReference>
<dbReference type="PDB" id="7X7M">
    <property type="method" value="EM"/>
    <property type="resolution" value="2.33 A"/>
    <property type="chains" value="0/1/2/3/4/5/6/7/A/B/C/D/E/F/G/H/I/J/K/L/M/N/O/P/Q/R/S/T/U/V=1-154"/>
</dbReference>
<dbReference type="PDB" id="8F25">
    <property type="method" value="EM"/>
    <property type="resolution" value="2.60 A"/>
    <property type="chains" value="0/1/2/3/4/5/6/7/8/9/A/B/C/D/E/F/G/H/I/J/K/L/M/N/O/P/Q/R/S/T=1-154"/>
</dbReference>
<dbReference type="PDB" id="8PVJ">
    <property type="method" value="EM"/>
    <property type="resolution" value="3.00 A"/>
    <property type="chains" value="A=1-154"/>
</dbReference>
<dbReference type="PDB" id="8YT4">
    <property type="method" value="EM"/>
    <property type="resolution" value="1.42 A"/>
    <property type="chains" value="A=1-154"/>
</dbReference>
<dbReference type="PDB" id="9G3H">
    <property type="method" value="EM"/>
    <property type="resolution" value="2.44 A"/>
    <property type="chains" value="A/AA/AB/AC/B/BA/BB/BC/C/CA/CB/CC/D/DA/DB/DC/E/EA/EB/EC/F/FA/FB/FC/G/GA/GB/GC/H/HA=3-154"/>
</dbReference>
<dbReference type="PDB" id="9G3I">
    <property type="method" value="EM"/>
    <property type="resolution" value="2.85 A"/>
    <property type="chains" value="A/AA/AB/AC/B/BA/BB/BC/C/CA/CB/CC/D/DA/DB/DC/E/EA/EB/EC/F/FA/FB/FC/G/GA/GB/GC/H/HA=3-154"/>
</dbReference>
<dbReference type="PDB" id="9G3J">
    <property type="method" value="EM"/>
    <property type="resolution" value="3.10 A"/>
    <property type="chains" value="A/AA/AB/AC/B/BA/BB/BC/C/CA/CB/CC/D/DA/DB/DC/E/EA/EB/EC/F/FA/FB/FC/G/GA/GB/GC/H/HA=3-154"/>
</dbReference>
<dbReference type="PDB" id="9G3M">
    <property type="method" value="EM"/>
    <property type="resolution" value="3.09 A"/>
    <property type="chains" value="A/AA/AB/AC/AD/AE/B/BA/BB/BC/BD/BE/C/CA/CB/CC/CD/CE/D/DA/DB/DC/DD/DE/E/EA/EB/EC/ED/EE=3-154"/>
</dbReference>
<dbReference type="PDB" id="9G3N">
    <property type="method" value="EM"/>
    <property type="resolution" value="3.07 A"/>
    <property type="chains" value="A/AA/AB/AC/AD/AE/AF/B/BA/BB/BC/BD/BE/BF/C/CA/CB/CC/CD/CE/CF/D/DA/DB/DC/DD/DE/DF/E/EA=3-154"/>
</dbReference>
<dbReference type="PDB" id="9G3O">
    <property type="method" value="EM"/>
    <property type="resolution" value="2.76 A"/>
    <property type="chains" value="A/AA/AB/AC/AD/B/BA/BB/BC/BD/C/CA/CB/CC/CD/D/DA/DB/DC/DD/E/EA/EB/EC/ED/F/FA/FB/FC/FD=3-154"/>
</dbReference>
<dbReference type="PDB" id="9G3P">
    <property type="method" value="EM"/>
    <property type="resolution" value="2.08 A"/>
    <property type="chains" value="A/AA/AB/B/BA/BB/C/CA/CB/D/DA/DB/E/EA/EB/F/FA/FB/G/GA/GB/H/HA/HB/I/IA/J/JA/K/KA=3-154"/>
</dbReference>
<dbReference type="PDBsum" id="1HQK"/>
<dbReference type="PDBsum" id="1NQU"/>
<dbReference type="PDBsum" id="1NQV"/>
<dbReference type="PDBsum" id="1NQW"/>
<dbReference type="PDBsum" id="1NQX"/>
<dbReference type="PDBsum" id="5MPP"/>
<dbReference type="PDBsum" id="5MQ3"/>
<dbReference type="PDBsum" id="5MQ7"/>
<dbReference type="PDBsum" id="7A4F"/>
<dbReference type="PDBsum" id="7A4G"/>
<dbReference type="PDBsum" id="7A4H"/>
<dbReference type="PDBsum" id="7A4I"/>
<dbReference type="PDBsum" id="7A4J"/>
<dbReference type="PDBsum" id="7X7M"/>
<dbReference type="PDBsum" id="8F25"/>
<dbReference type="PDBsum" id="8PVJ"/>
<dbReference type="PDBsum" id="8YT4"/>
<dbReference type="PDBsum" id="9G3H"/>
<dbReference type="PDBsum" id="9G3I"/>
<dbReference type="PDBsum" id="9G3J"/>
<dbReference type="PDBsum" id="9G3M"/>
<dbReference type="PDBsum" id="9G3N"/>
<dbReference type="PDBsum" id="9G3O"/>
<dbReference type="PDBsum" id="9G3P"/>
<dbReference type="EMDB" id="EMD-11631"/>
<dbReference type="EMDB" id="EMD-11632"/>
<dbReference type="EMDB" id="EMD-11633"/>
<dbReference type="EMDB" id="EMD-11634"/>
<dbReference type="EMDB" id="EMD-11635"/>
<dbReference type="EMDB" id="EMD-17968"/>
<dbReference type="EMDB" id="EMD-28807"/>
<dbReference type="EMDB" id="EMD-33041"/>
<dbReference type="EMDB" id="EMD-3538"/>
<dbReference type="EMDB" id="EMD-3543"/>
<dbReference type="EMDB" id="EMD-3544"/>
<dbReference type="EMDB" id="EMD-39478"/>
<dbReference type="EMDB" id="EMD-50999"/>
<dbReference type="EMDB" id="EMD-51000"/>
<dbReference type="EMDB" id="EMD-51001"/>
<dbReference type="EMDB" id="EMD-51003"/>
<dbReference type="EMDB" id="EMD-51004"/>
<dbReference type="EMDB" id="EMD-51005"/>
<dbReference type="EMDB" id="EMD-51006"/>
<dbReference type="SMR" id="O66529"/>
<dbReference type="FunCoup" id="O66529">
    <property type="interactions" value="465"/>
</dbReference>
<dbReference type="STRING" id="224324.aq_132"/>
<dbReference type="DrugBank" id="DB04262">
    <property type="generic name" value="3-(7-hydroxy-8-ribityllumazine-6-yl) propionic acid"/>
</dbReference>
<dbReference type="DrugBank" id="DB04128">
    <property type="generic name" value="5-Nitroso-6-ribityl-amino-2,4(1H,3H)-pyrimidinedione"/>
</dbReference>
<dbReference type="DrugBank" id="DB02214">
    <property type="generic name" value="6,7-dioxo-5H-8-ribitylaminolumazine"/>
</dbReference>
<dbReference type="EnsemblBacteria" id="AAC06489">
    <property type="protein sequence ID" value="AAC06489"/>
    <property type="gene ID" value="aq_132"/>
</dbReference>
<dbReference type="KEGG" id="aae:aq_132"/>
<dbReference type="PATRIC" id="fig|224324.8.peg.111"/>
<dbReference type="eggNOG" id="COG0054">
    <property type="taxonomic scope" value="Bacteria"/>
</dbReference>
<dbReference type="HOGENOM" id="CLU_089358_1_1_0"/>
<dbReference type="InParanoid" id="O66529"/>
<dbReference type="OrthoDB" id="9809709at2"/>
<dbReference type="BRENDA" id="2.5.1.78">
    <property type="organism ID" value="396"/>
</dbReference>
<dbReference type="SABIO-RK" id="O66529"/>
<dbReference type="UniPathway" id="UPA00275">
    <property type="reaction ID" value="UER00404"/>
</dbReference>
<dbReference type="EvolutionaryTrace" id="O66529"/>
<dbReference type="Proteomes" id="UP000000798">
    <property type="component" value="Chromosome"/>
</dbReference>
<dbReference type="GO" id="GO:0005737">
    <property type="term" value="C:cytoplasm"/>
    <property type="evidence" value="ECO:0000318"/>
    <property type="project" value="GO_Central"/>
</dbReference>
<dbReference type="GO" id="GO:0005829">
    <property type="term" value="C:cytosol"/>
    <property type="evidence" value="ECO:0000318"/>
    <property type="project" value="GO_Central"/>
</dbReference>
<dbReference type="GO" id="GO:0009349">
    <property type="term" value="C:riboflavin synthase complex"/>
    <property type="evidence" value="ECO:0007669"/>
    <property type="project" value="InterPro"/>
</dbReference>
<dbReference type="GO" id="GO:0000906">
    <property type="term" value="F:6,7-dimethyl-8-ribityllumazine synthase activity"/>
    <property type="evidence" value="ECO:0000318"/>
    <property type="project" value="GO_Central"/>
</dbReference>
<dbReference type="GO" id="GO:0009231">
    <property type="term" value="P:riboflavin biosynthetic process"/>
    <property type="evidence" value="ECO:0000318"/>
    <property type="project" value="GO_Central"/>
</dbReference>
<dbReference type="CDD" id="cd09209">
    <property type="entry name" value="Lumazine_synthase-I"/>
    <property type="match status" value="1"/>
</dbReference>
<dbReference type="FunFam" id="3.40.50.960:FF:000001">
    <property type="entry name" value="6,7-dimethyl-8-ribityllumazine synthase"/>
    <property type="match status" value="1"/>
</dbReference>
<dbReference type="Gene3D" id="3.40.50.960">
    <property type="entry name" value="Lumazine/riboflavin synthase"/>
    <property type="match status" value="1"/>
</dbReference>
<dbReference type="HAMAP" id="MF_00178">
    <property type="entry name" value="Lumazine_synth"/>
    <property type="match status" value="1"/>
</dbReference>
<dbReference type="InterPro" id="IPR034964">
    <property type="entry name" value="LS"/>
</dbReference>
<dbReference type="InterPro" id="IPR002180">
    <property type="entry name" value="LS/RS"/>
</dbReference>
<dbReference type="InterPro" id="IPR036467">
    <property type="entry name" value="LS/RS_sf"/>
</dbReference>
<dbReference type="NCBIfam" id="TIGR00114">
    <property type="entry name" value="lumazine-synth"/>
    <property type="match status" value="1"/>
</dbReference>
<dbReference type="NCBIfam" id="NF000812">
    <property type="entry name" value="PRK00061.1-4"/>
    <property type="match status" value="1"/>
</dbReference>
<dbReference type="PANTHER" id="PTHR21058:SF0">
    <property type="entry name" value="6,7-DIMETHYL-8-RIBITYLLUMAZINE SYNTHASE"/>
    <property type="match status" value="1"/>
</dbReference>
<dbReference type="PANTHER" id="PTHR21058">
    <property type="entry name" value="6,7-DIMETHYL-8-RIBITYLLUMAZINE SYNTHASE DMRL SYNTHASE LUMAZINE SYNTHASE"/>
    <property type="match status" value="1"/>
</dbReference>
<dbReference type="Pfam" id="PF00885">
    <property type="entry name" value="DMRL_synthase"/>
    <property type="match status" value="1"/>
</dbReference>
<dbReference type="SUPFAM" id="SSF52121">
    <property type="entry name" value="Lumazine synthase"/>
    <property type="match status" value="1"/>
</dbReference>
<gene>
    <name type="primary">ribH</name>
    <name type="ordered locus">aq_132</name>
</gene>
<comment type="function">
    <text evidence="2 3">Catalyzes the formation of 6,7-dimethyl-8-ribityllumazine by condensation of 5-amino-6-(D-ribitylamino)uracil with 3,4-dihydroxy-2-butanone 4-phosphate. This is the penultimate step in the biosynthesis of riboflavin.</text>
</comment>
<comment type="catalytic activity">
    <reaction evidence="2 3">
        <text>(2S)-2-hydroxy-3-oxobutyl phosphate + 5-amino-6-(D-ribitylamino)uracil = 6,7-dimethyl-8-(1-D-ribityl)lumazine + phosphate + 2 H2O + H(+)</text>
        <dbReference type="Rhea" id="RHEA:26152"/>
        <dbReference type="ChEBI" id="CHEBI:15377"/>
        <dbReference type="ChEBI" id="CHEBI:15378"/>
        <dbReference type="ChEBI" id="CHEBI:15934"/>
        <dbReference type="ChEBI" id="CHEBI:43474"/>
        <dbReference type="ChEBI" id="CHEBI:58201"/>
        <dbReference type="ChEBI" id="CHEBI:58830"/>
        <dbReference type="EC" id="2.5.1.78"/>
    </reaction>
</comment>
<comment type="biophysicochemical properties">
    <kinetics>
        <KM evidence="3">10 uM for 5-amino-6-(D-ribitylamino)uracil (at 37 degrees Celsius and pH 7.0)</KM>
        <KM evidence="3">26 uM for 3,4-dihydroxy-2-butanone 4-phosphate (at 37 degrees Celsius and pH 7.0)</KM>
        <Vmax evidence="3">31.0 nmol/min/mg enzyme (at 37 degrees Celsius and pH 7.0)</Vmax>
        <Vmax evidence="3">425.0 nmol/min/mg enzyme (at 70 degrees Celsius and pH 7.0)</Vmax>
    </kinetics>
    <temperatureDependence>
        <text evidence="2">Extremely thermostable. Has a melting temperature of 119.9 degrees Celsius.</text>
    </temperatureDependence>
</comment>
<comment type="pathway">
    <text evidence="4">Cofactor biosynthesis; riboflavin biosynthesis; riboflavin from 2-hydroxy-3-oxobutyl phosphate and 5-amino-6-(D-ribitylamino)uracil: step 1/2.</text>
</comment>
<comment type="subunit">
    <text evidence="2">Forms an icosahedral capsid composed of 60 subunits, arranged as a dodecamer of pentamers.</text>
</comment>
<comment type="similarity">
    <text evidence="5">Belongs to the DMRL synthase family.</text>
</comment>
<protein>
    <recommendedName>
        <fullName>6,7-dimethyl-8-ribityllumazine synthase</fullName>
        <shortName>DMRL synthase</shortName>
        <shortName>LS</shortName>
        <shortName>Lumazine synthase</shortName>
        <ecNumber>2.5.1.78</ecNumber>
    </recommendedName>
</protein>
<sequence>MQIYEGKLTAEGLRFGIVASRFNHALVDRLVEGAIDCIVRHGGREEDITLVRVPGSWEIPVAAGELARKEDIDAVIAIGVLIRGATPHFDYIASEVSKGLANLSLELRKPITFGVITADTLEQAIERAGTKHGNKGWEAALSAIEMANLFKSLR</sequence>